<reference key="1">
    <citation type="journal article" date="2002" name="Proc. Natl. Acad. Sci. U.S.A.">
        <title>The complete genome sequence of Chlorobium tepidum TLS, a photosynthetic, anaerobic, green-sulfur bacterium.</title>
        <authorList>
            <person name="Eisen J.A."/>
            <person name="Nelson K.E."/>
            <person name="Paulsen I.T."/>
            <person name="Heidelberg J.F."/>
            <person name="Wu M."/>
            <person name="Dodson R.J."/>
            <person name="DeBoy R.T."/>
            <person name="Gwinn M.L."/>
            <person name="Nelson W.C."/>
            <person name="Haft D.H."/>
            <person name="Hickey E.K."/>
            <person name="Peterson J.D."/>
            <person name="Durkin A.S."/>
            <person name="Kolonay J.F."/>
            <person name="Yang F."/>
            <person name="Holt I.E."/>
            <person name="Umayam L.A."/>
            <person name="Mason T.M."/>
            <person name="Brenner M."/>
            <person name="Shea T.P."/>
            <person name="Parksey D.S."/>
            <person name="Nierman W.C."/>
            <person name="Feldblyum T.V."/>
            <person name="Hansen C.L."/>
            <person name="Craven M.B."/>
            <person name="Radune D."/>
            <person name="Vamathevan J.J."/>
            <person name="Khouri H.M."/>
            <person name="White O."/>
            <person name="Gruber T.M."/>
            <person name="Ketchum K.A."/>
            <person name="Venter J.C."/>
            <person name="Tettelin H."/>
            <person name="Bryant D.A."/>
            <person name="Fraser C.M."/>
        </authorList>
    </citation>
    <scope>NUCLEOTIDE SEQUENCE [LARGE SCALE GENOMIC DNA]</scope>
    <source>
        <strain>ATCC 49652 / DSM 12025 / NBRC 103806 / TLS</strain>
    </source>
</reference>
<feature type="chain" id="PRO_0000173094" description="Large ribosomal subunit protein bL31">
    <location>
        <begin position="1"/>
        <end position="75"/>
    </location>
</feature>
<evidence type="ECO:0000255" key="1">
    <source>
        <dbReference type="HAMAP-Rule" id="MF_00501"/>
    </source>
</evidence>
<evidence type="ECO:0000305" key="2"/>
<accession>Q8KC50</accession>
<name>RL31_CHLTE</name>
<proteinExistence type="inferred from homology"/>
<organism>
    <name type="scientific">Chlorobaculum tepidum (strain ATCC 49652 / DSM 12025 / NBRC 103806 / TLS)</name>
    <name type="common">Chlorobium tepidum</name>
    <dbReference type="NCBI Taxonomy" id="194439"/>
    <lineage>
        <taxon>Bacteria</taxon>
        <taxon>Pseudomonadati</taxon>
        <taxon>Chlorobiota</taxon>
        <taxon>Chlorobiia</taxon>
        <taxon>Chlorobiales</taxon>
        <taxon>Chlorobiaceae</taxon>
        <taxon>Chlorobaculum</taxon>
    </lineage>
</organism>
<sequence>MKPEIHPKYTKVTVNCANCGTTFETRSTRNNNIKVDICSKCHPFYTGKQVLVDTAGRVDRFNKRFAKAAPKASAQ</sequence>
<comment type="function">
    <text evidence="1">Binds the 23S rRNA.</text>
</comment>
<comment type="subunit">
    <text evidence="1">Part of the 50S ribosomal subunit.</text>
</comment>
<comment type="similarity">
    <text evidence="1">Belongs to the bacterial ribosomal protein bL31 family. Type A subfamily.</text>
</comment>
<gene>
    <name evidence="1" type="primary">rpmE</name>
    <name type="ordered locus">CT1576</name>
</gene>
<dbReference type="EMBL" id="AE006470">
    <property type="protein sequence ID" value="AAM72801.1"/>
    <property type="molecule type" value="Genomic_DNA"/>
</dbReference>
<dbReference type="RefSeq" id="NP_662459.1">
    <property type="nucleotide sequence ID" value="NC_002932.3"/>
</dbReference>
<dbReference type="RefSeq" id="WP_010933240.1">
    <property type="nucleotide sequence ID" value="NC_002932.3"/>
</dbReference>
<dbReference type="SMR" id="Q8KC50"/>
<dbReference type="STRING" id="194439.CT1576"/>
<dbReference type="EnsemblBacteria" id="AAM72801">
    <property type="protein sequence ID" value="AAM72801"/>
    <property type="gene ID" value="CT1576"/>
</dbReference>
<dbReference type="KEGG" id="cte:CT1576"/>
<dbReference type="PATRIC" id="fig|194439.7.peg.1427"/>
<dbReference type="eggNOG" id="COG0254">
    <property type="taxonomic scope" value="Bacteria"/>
</dbReference>
<dbReference type="HOGENOM" id="CLU_114306_4_2_10"/>
<dbReference type="OrthoDB" id="9803251at2"/>
<dbReference type="Proteomes" id="UP000001007">
    <property type="component" value="Chromosome"/>
</dbReference>
<dbReference type="GO" id="GO:1990904">
    <property type="term" value="C:ribonucleoprotein complex"/>
    <property type="evidence" value="ECO:0007669"/>
    <property type="project" value="UniProtKB-KW"/>
</dbReference>
<dbReference type="GO" id="GO:0005840">
    <property type="term" value="C:ribosome"/>
    <property type="evidence" value="ECO:0007669"/>
    <property type="project" value="UniProtKB-KW"/>
</dbReference>
<dbReference type="GO" id="GO:0019843">
    <property type="term" value="F:rRNA binding"/>
    <property type="evidence" value="ECO:0007669"/>
    <property type="project" value="UniProtKB-KW"/>
</dbReference>
<dbReference type="GO" id="GO:0003735">
    <property type="term" value="F:structural constituent of ribosome"/>
    <property type="evidence" value="ECO:0007669"/>
    <property type="project" value="InterPro"/>
</dbReference>
<dbReference type="GO" id="GO:0006412">
    <property type="term" value="P:translation"/>
    <property type="evidence" value="ECO:0007669"/>
    <property type="project" value="UniProtKB-UniRule"/>
</dbReference>
<dbReference type="Gene3D" id="4.10.830.30">
    <property type="entry name" value="Ribosomal protein L31"/>
    <property type="match status" value="1"/>
</dbReference>
<dbReference type="HAMAP" id="MF_00501">
    <property type="entry name" value="Ribosomal_bL31_1"/>
    <property type="match status" value="1"/>
</dbReference>
<dbReference type="InterPro" id="IPR034704">
    <property type="entry name" value="Ribosomal_bL28/bL31-like_sf"/>
</dbReference>
<dbReference type="InterPro" id="IPR002150">
    <property type="entry name" value="Ribosomal_bL31"/>
</dbReference>
<dbReference type="InterPro" id="IPR027491">
    <property type="entry name" value="Ribosomal_bL31_A"/>
</dbReference>
<dbReference type="InterPro" id="IPR042105">
    <property type="entry name" value="Ribosomal_bL31_sf"/>
</dbReference>
<dbReference type="NCBIfam" id="TIGR00105">
    <property type="entry name" value="L31"/>
    <property type="match status" value="1"/>
</dbReference>
<dbReference type="NCBIfam" id="NF000612">
    <property type="entry name" value="PRK00019.1"/>
    <property type="match status" value="1"/>
</dbReference>
<dbReference type="NCBIfam" id="NF001809">
    <property type="entry name" value="PRK00528.1"/>
    <property type="match status" value="1"/>
</dbReference>
<dbReference type="PANTHER" id="PTHR33280">
    <property type="entry name" value="50S RIBOSOMAL PROTEIN L31, CHLOROPLASTIC"/>
    <property type="match status" value="1"/>
</dbReference>
<dbReference type="PANTHER" id="PTHR33280:SF1">
    <property type="entry name" value="LARGE RIBOSOMAL SUBUNIT PROTEIN BL31C"/>
    <property type="match status" value="1"/>
</dbReference>
<dbReference type="Pfam" id="PF01197">
    <property type="entry name" value="Ribosomal_L31"/>
    <property type="match status" value="1"/>
</dbReference>
<dbReference type="PRINTS" id="PR01249">
    <property type="entry name" value="RIBOSOMALL31"/>
</dbReference>
<dbReference type="SUPFAM" id="SSF143800">
    <property type="entry name" value="L28p-like"/>
    <property type="match status" value="1"/>
</dbReference>
<dbReference type="PROSITE" id="PS01143">
    <property type="entry name" value="RIBOSOMAL_L31"/>
    <property type="match status" value="1"/>
</dbReference>
<keyword id="KW-1185">Reference proteome</keyword>
<keyword id="KW-0687">Ribonucleoprotein</keyword>
<keyword id="KW-0689">Ribosomal protein</keyword>
<keyword id="KW-0694">RNA-binding</keyword>
<keyword id="KW-0699">rRNA-binding</keyword>
<protein>
    <recommendedName>
        <fullName evidence="1">Large ribosomal subunit protein bL31</fullName>
    </recommendedName>
    <alternativeName>
        <fullName evidence="2">50S ribosomal protein L31</fullName>
    </alternativeName>
</protein>